<dbReference type="EMBL" id="AY318959">
    <property type="protein sequence ID" value="AAP85370.1"/>
    <property type="molecule type" value="mRNA"/>
</dbReference>
<dbReference type="EMBL" id="BC081949">
    <property type="protein sequence ID" value="AAH81949.1"/>
    <property type="molecule type" value="mRNA"/>
</dbReference>
<dbReference type="RefSeq" id="NP_001004199.1">
    <molecule id="Q66HA4-1"/>
    <property type="nucleotide sequence ID" value="NM_001004199.1"/>
</dbReference>
<dbReference type="RefSeq" id="XP_038962973.1">
    <molecule id="Q66HA4-1"/>
    <property type="nucleotide sequence ID" value="XM_039107045.2"/>
</dbReference>
<dbReference type="RefSeq" id="XP_063141623.1">
    <molecule id="Q66HA4-1"/>
    <property type="nucleotide sequence ID" value="XM_063285553.1"/>
</dbReference>
<dbReference type="BMRB" id="Q66HA4"/>
<dbReference type="SMR" id="Q66HA4"/>
<dbReference type="FunCoup" id="Q66HA4">
    <property type="interactions" value="2042"/>
</dbReference>
<dbReference type="IntAct" id="Q66HA4">
    <property type="interactions" value="1"/>
</dbReference>
<dbReference type="STRING" id="10116.ENSRNOP00000046052"/>
<dbReference type="PhosphoSitePlus" id="Q66HA4"/>
<dbReference type="PaxDb" id="10116-ENSRNOP00000046052"/>
<dbReference type="Ensembl" id="ENSRNOT00000011371.7">
    <molecule id="Q66HA4-1"/>
    <property type="protein sequence ID" value="ENSRNOP00000011371.4"/>
    <property type="gene ID" value="ENSRNOG00000008393.9"/>
</dbReference>
<dbReference type="Ensembl" id="ENSRNOT00000041988.6">
    <molecule id="Q66HA4-2"/>
    <property type="protein sequence ID" value="ENSRNOP00000046052.3"/>
    <property type="gene ID" value="ENSRNOG00000008393.9"/>
</dbReference>
<dbReference type="GeneID" id="246244"/>
<dbReference type="KEGG" id="rno:246244"/>
<dbReference type="UCSC" id="RGD:708579">
    <molecule id="Q66HA4-1"/>
    <property type="organism name" value="rat"/>
</dbReference>
<dbReference type="AGR" id="RGD:708579"/>
<dbReference type="CTD" id="8887"/>
<dbReference type="RGD" id="708579">
    <property type="gene designation" value="Tax1bp1"/>
</dbReference>
<dbReference type="eggNOG" id="ENOG502QQ1D">
    <property type="taxonomic scope" value="Eukaryota"/>
</dbReference>
<dbReference type="GeneTree" id="ENSGT00950000183025"/>
<dbReference type="HOGENOM" id="CLU_021315_1_0_1"/>
<dbReference type="InParanoid" id="Q66HA4"/>
<dbReference type="PhylomeDB" id="Q66HA4"/>
<dbReference type="TreeFam" id="TF329501"/>
<dbReference type="Reactome" id="R-RNO-5357905">
    <property type="pathway name" value="Regulation of TNFR1 signaling"/>
</dbReference>
<dbReference type="Reactome" id="R-RNO-936440">
    <property type="pathway name" value="Negative regulators of DDX58/IFIH1 signaling"/>
</dbReference>
<dbReference type="PRO" id="PR:Q66HA4"/>
<dbReference type="Proteomes" id="UP000002494">
    <property type="component" value="Chromosome 4"/>
</dbReference>
<dbReference type="Bgee" id="ENSRNOG00000008393">
    <property type="expression patterns" value="Expressed in colon and 20 other cell types or tissues"/>
</dbReference>
<dbReference type="GO" id="GO:0005776">
    <property type="term" value="C:autophagosome"/>
    <property type="evidence" value="ECO:0007669"/>
    <property type="project" value="UniProtKB-SubCell"/>
</dbReference>
<dbReference type="GO" id="GO:0005737">
    <property type="term" value="C:cytoplasm"/>
    <property type="evidence" value="ECO:0000266"/>
    <property type="project" value="RGD"/>
</dbReference>
<dbReference type="GO" id="GO:0031410">
    <property type="term" value="C:cytoplasmic vesicle"/>
    <property type="evidence" value="ECO:0007669"/>
    <property type="project" value="UniProtKB-KW"/>
</dbReference>
<dbReference type="GO" id="GO:0005739">
    <property type="term" value="C:mitochondrion"/>
    <property type="evidence" value="ECO:0000266"/>
    <property type="project" value="RGD"/>
</dbReference>
<dbReference type="GO" id="GO:0000407">
    <property type="term" value="C:phagophore assembly site"/>
    <property type="evidence" value="ECO:0007669"/>
    <property type="project" value="UniProtKB-SubCell"/>
</dbReference>
<dbReference type="GO" id="GO:0019900">
    <property type="term" value="F:kinase binding"/>
    <property type="evidence" value="ECO:0000266"/>
    <property type="project" value="RGD"/>
</dbReference>
<dbReference type="GO" id="GO:0030674">
    <property type="term" value="F:protein-macromolecule adaptor activity"/>
    <property type="evidence" value="ECO:0000266"/>
    <property type="project" value="RGD"/>
</dbReference>
<dbReference type="GO" id="GO:0008270">
    <property type="term" value="F:zinc ion binding"/>
    <property type="evidence" value="ECO:0007669"/>
    <property type="project" value="UniProtKB-KW"/>
</dbReference>
<dbReference type="GO" id="GO:0006915">
    <property type="term" value="P:apoptotic process"/>
    <property type="evidence" value="ECO:0007669"/>
    <property type="project" value="UniProtKB-KW"/>
</dbReference>
<dbReference type="GO" id="GO:0043066">
    <property type="term" value="P:negative regulation of apoptotic process"/>
    <property type="evidence" value="ECO:0000315"/>
    <property type="project" value="RGD"/>
</dbReference>
<dbReference type="GO" id="GO:0039532">
    <property type="term" value="P:negative regulation of cytoplasmic pattern recognition receptor signaling pathway"/>
    <property type="evidence" value="ECO:0000266"/>
    <property type="project" value="RGD"/>
</dbReference>
<dbReference type="GO" id="GO:0034144">
    <property type="term" value="P:negative regulation of toll-like receptor 4 signaling pathway"/>
    <property type="evidence" value="ECO:0000266"/>
    <property type="project" value="RGD"/>
</dbReference>
<dbReference type="GO" id="GO:1905161">
    <property type="term" value="P:protein localization to phagocytic vesicle"/>
    <property type="evidence" value="ECO:0000266"/>
    <property type="project" value="RGD"/>
</dbReference>
<dbReference type="CDD" id="cd21969">
    <property type="entry name" value="Zn-C2H2_TAX1BP1_rpt1"/>
    <property type="match status" value="1"/>
</dbReference>
<dbReference type="CDD" id="cd21970">
    <property type="entry name" value="Zn-C2H2_TAX1BP1_rpt2"/>
    <property type="match status" value="1"/>
</dbReference>
<dbReference type="FunFam" id="2.60.40.2840:FF:000002">
    <property type="entry name" value="Tax1-binding protein 1 isoform 2"/>
    <property type="match status" value="1"/>
</dbReference>
<dbReference type="Gene3D" id="2.60.40.2840">
    <property type="match status" value="1"/>
</dbReference>
<dbReference type="Gene3D" id="6.20.250.40">
    <property type="match status" value="1"/>
</dbReference>
<dbReference type="InterPro" id="IPR012852">
    <property type="entry name" value="CALCOCO1-like"/>
</dbReference>
<dbReference type="InterPro" id="IPR041641">
    <property type="entry name" value="CALCOCO1/2_Zn_UBZ1"/>
</dbReference>
<dbReference type="InterPro" id="IPR041611">
    <property type="entry name" value="SKICH"/>
</dbReference>
<dbReference type="InterPro" id="IPR051002">
    <property type="entry name" value="UBA_autophagy_assoc_protein"/>
</dbReference>
<dbReference type="PANTHER" id="PTHR31915">
    <property type="entry name" value="SKICH DOMAIN-CONTAINING PROTEIN"/>
    <property type="match status" value="1"/>
</dbReference>
<dbReference type="PANTHER" id="PTHR31915:SF8">
    <property type="entry name" value="TAX1-BINDING PROTEIN 1"/>
    <property type="match status" value="1"/>
</dbReference>
<dbReference type="Pfam" id="PF07888">
    <property type="entry name" value="CALCOCO1"/>
    <property type="match status" value="1"/>
</dbReference>
<dbReference type="Pfam" id="PF17751">
    <property type="entry name" value="SKICH"/>
    <property type="match status" value="1"/>
</dbReference>
<dbReference type="Pfam" id="PF18112">
    <property type="entry name" value="Zn-C2H2_12"/>
    <property type="match status" value="2"/>
</dbReference>
<dbReference type="PROSITE" id="PS51905">
    <property type="entry name" value="ZF_UBZ1"/>
    <property type="match status" value="2"/>
</dbReference>
<comment type="function">
    <text evidence="3">Ubiquitin-binding adapter that participates in inflammatory, antiviral and innate immune processes as well as selective autophagy regulation. Plays a key role in the negative regulation of NF-kappa-B and IRF3 signalings by acting as an adapter for the ubiquitin-editing enzyme A20/TNFAIP3 to bind and inactivate its substrates. Disrupts the interactions between the E3 ubiquitin ligase TRAF3 and TBK1/IKBKE to attenuate 'Lys63'-linked polyubiquitination of TBK1 and thereby IFN-beta production. Also recruits A20/TNFAIP3 to ubiquitinated signaling proteins TRAF6 and RIPK1, leading to their deubiquitination and disruption of IL-1 and TNF-induced NF-kappa-B signaling pathways. Inhibits virus-induced apoptosis by inducing the 'Lys-48'-linked polyubiquitination and degradation of MAVS via recruitment of the E3 ligase ITCH, thereby attenuating MAVS-mediated apoptosis signaling. As a macroautophagy/autophagy receptor, facilitates the xenophagic clearance of pathogenic bacteria such as Salmonella typhimurium and Mycobacterium tuberculosis. Upon NBR1 recruitment to the SQSTM1-ubiquitin condensates, acts as the major recruiter of RB1CC1 to these ubiquitin condensates to promote their autophagic degradation. Mediates the autophagic degradation of other substrates including TICAM1.</text>
</comment>
<comment type="subunit">
    <text evidence="3">Homooligomer. Interacts with TNFAIP3. Interacts with STARD13. Interacts with MYO6. Interacts with TOM1; the interaction is indirect and is mediated by MYO6, which acts as a bridge between TOM1 and TAX1BP1. Interacts with MAVS; this interaction induces MAVS polyubiquitination. Interacts with TNIP1. Interacts with TRAF6; this interaction mediates deubiquitination of TRAF6 and inhibition of NF-kappa-B activation. Interacts with RIPK1; this interaction negatively regulates RIPK1 ubiquitination. Interacts with NBR1. Interacts with TBK1. Interacts with RB1CC1. Interacts with SQSTM1. Interacts with AZI2. Interacts with TICAM1 and TRIM32; these interactions target TICAM1 to TAX1BP1-mediated selective autophagic degradation.</text>
</comment>
<comment type="subcellular location">
    <subcellularLocation>
        <location evidence="3">Cytoplasm</location>
    </subcellularLocation>
    <subcellularLocation>
        <location evidence="3">Mitochondrion</location>
    </subcellularLocation>
    <subcellularLocation>
        <location evidence="3">Preautophagosomal structure</location>
    </subcellularLocation>
    <subcellularLocation>
        <location evidence="3">Cytoplasmic vesicle</location>
        <location evidence="3">Autophagosome</location>
    </subcellularLocation>
</comment>
<comment type="alternative products">
    <event type="alternative splicing"/>
    <isoform>
        <id>Q66HA4-1</id>
        <name>1</name>
        <sequence type="displayed"/>
    </isoform>
    <isoform>
        <id>Q66HA4-2</id>
        <name>2</name>
        <sequence type="described" ref="VSP_018357 VSP_018358"/>
    </isoform>
</comment>
<comment type="domain">
    <text evidence="3">The C-terminal UBZ-type zinc fingers function as ubiquitin-binding domains.</text>
</comment>
<comment type="PTM">
    <text evidence="1">Phosphorylated in the C-terminal region by CHUK/IKKA leading to NF-kappa-B signaling down-regulation.</text>
</comment>
<organism>
    <name type="scientific">Rattus norvegicus</name>
    <name type="common">Rat</name>
    <dbReference type="NCBI Taxonomy" id="10116"/>
    <lineage>
        <taxon>Eukaryota</taxon>
        <taxon>Metazoa</taxon>
        <taxon>Chordata</taxon>
        <taxon>Craniata</taxon>
        <taxon>Vertebrata</taxon>
        <taxon>Euteleostomi</taxon>
        <taxon>Mammalia</taxon>
        <taxon>Eutheria</taxon>
        <taxon>Euarchontoglires</taxon>
        <taxon>Glires</taxon>
        <taxon>Rodentia</taxon>
        <taxon>Myomorpha</taxon>
        <taxon>Muroidea</taxon>
        <taxon>Muridae</taxon>
        <taxon>Murinae</taxon>
        <taxon>Rattus</taxon>
    </lineage>
</organism>
<keyword id="KW-0025">Alternative splicing</keyword>
<keyword id="KW-0053">Apoptosis</keyword>
<keyword id="KW-0175">Coiled coil</keyword>
<keyword id="KW-0963">Cytoplasm</keyword>
<keyword id="KW-0968">Cytoplasmic vesicle</keyword>
<keyword id="KW-0479">Metal-binding</keyword>
<keyword id="KW-0496">Mitochondrion</keyword>
<keyword id="KW-0597">Phosphoprotein</keyword>
<keyword id="KW-1185">Reference proteome</keyword>
<keyword id="KW-0677">Repeat</keyword>
<keyword id="KW-0862">Zinc</keyword>
<keyword id="KW-0863">Zinc-finger</keyword>
<evidence type="ECO:0000250" key="1"/>
<evidence type="ECO:0000250" key="2">
    <source>
        <dbReference type="UniProtKB" id="Q3UKC1"/>
    </source>
</evidence>
<evidence type="ECO:0000250" key="3">
    <source>
        <dbReference type="UniProtKB" id="Q86VP1"/>
    </source>
</evidence>
<evidence type="ECO:0000255" key="4"/>
<evidence type="ECO:0000255" key="5">
    <source>
        <dbReference type="PROSITE-ProRule" id="PRU01253"/>
    </source>
</evidence>
<evidence type="ECO:0000256" key="6">
    <source>
        <dbReference type="SAM" id="MobiDB-lite"/>
    </source>
</evidence>
<evidence type="ECO:0000303" key="7">
    <source>
    </source>
</evidence>
<accession>Q66HA4</accession>
<accession>Q7TQ13</accession>
<protein>
    <recommendedName>
        <fullName>Tax1-binding protein 1 homolog</fullName>
    </recommendedName>
    <alternativeName>
        <fullName>Liver regeneration-related protein LRRG004</fullName>
    </alternativeName>
</protein>
<gene>
    <name type="primary">Tax1bp1</name>
    <name type="ORF">Aa1076</name>
</gene>
<reference key="1">
    <citation type="submission" date="2003-06" db="EMBL/GenBank/DDBJ databases">
        <title>Liver regeneration after PH.</title>
        <authorList>
            <person name="Xu C.S."/>
            <person name="Li W.Q."/>
            <person name="Li Y.C."/>
            <person name="Chai L.Q."/>
            <person name="Yuan J.Y."/>
            <person name="Yang K.J."/>
            <person name="Yan H.M."/>
            <person name="Chang C.F."/>
            <person name="Zhao L.F."/>
            <person name="Ma H."/>
            <person name="Wang L."/>
            <person name="Wang S.F."/>
            <person name="Han H.P."/>
            <person name="Wang G.P."/>
            <person name="Shi J.B."/>
            <person name="Rahman S."/>
            <person name="Wang Q.N."/>
            <person name="Zhang J.B."/>
        </authorList>
    </citation>
    <scope>NUCLEOTIDE SEQUENCE [LARGE SCALE MRNA] (ISOFORM 1)</scope>
    <source>
        <tissue>Liver</tissue>
    </source>
</reference>
<reference key="2">
    <citation type="journal article" date="2004" name="Genome Res.">
        <title>The status, quality, and expansion of the NIH full-length cDNA project: the Mammalian Gene Collection (MGC).</title>
        <authorList>
            <consortium name="The MGC Project Team"/>
        </authorList>
    </citation>
    <scope>NUCLEOTIDE SEQUENCE [LARGE SCALE MRNA] (ISOFORM 2)</scope>
    <source>
        <tissue>Lung</tissue>
    </source>
</reference>
<feature type="chain" id="PRO_0000234557" description="Tax1-binding protein 1 homolog">
    <location>
        <begin position="1"/>
        <end position="813"/>
    </location>
</feature>
<feature type="zinc finger region" description="UBZ1-type 1" evidence="5">
    <location>
        <begin position="751"/>
        <end position="777"/>
    </location>
</feature>
<feature type="zinc finger region" description="UBZ1-type 2" evidence="5">
    <location>
        <begin position="778"/>
        <end position="804"/>
    </location>
</feature>
<feature type="region of interest" description="Oligomerization" evidence="1">
    <location>
        <begin position="320"/>
        <end position="420"/>
    </location>
</feature>
<feature type="region of interest" description="Disordered" evidence="6">
    <location>
        <begin position="667"/>
        <end position="732"/>
    </location>
</feature>
<feature type="coiled-coil region" evidence="4">
    <location>
        <begin position="144"/>
        <end position="596"/>
    </location>
</feature>
<feature type="binding site" evidence="5">
    <location>
        <position position="754"/>
    </location>
    <ligand>
        <name>Zn(2+)</name>
        <dbReference type="ChEBI" id="CHEBI:29105"/>
        <label>1</label>
    </ligand>
</feature>
<feature type="binding site" evidence="5">
    <location>
        <position position="757"/>
    </location>
    <ligand>
        <name>Zn(2+)</name>
        <dbReference type="ChEBI" id="CHEBI:29105"/>
        <label>1</label>
    </ligand>
</feature>
<feature type="binding site" evidence="5">
    <location>
        <position position="773"/>
    </location>
    <ligand>
        <name>Zn(2+)</name>
        <dbReference type="ChEBI" id="CHEBI:29105"/>
        <label>1</label>
    </ligand>
</feature>
<feature type="binding site" evidence="5">
    <location>
        <position position="777"/>
    </location>
    <ligand>
        <name>Zn(2+)</name>
        <dbReference type="ChEBI" id="CHEBI:29105"/>
        <label>1</label>
    </ligand>
</feature>
<feature type="binding site" evidence="5">
    <location>
        <position position="781"/>
    </location>
    <ligand>
        <name>Zn(2+)</name>
        <dbReference type="ChEBI" id="CHEBI:29105"/>
        <label>2</label>
    </ligand>
</feature>
<feature type="binding site" evidence="5">
    <location>
        <position position="784"/>
    </location>
    <ligand>
        <name>Zn(2+)</name>
        <dbReference type="ChEBI" id="CHEBI:29105"/>
        <label>2</label>
    </ligand>
</feature>
<feature type="binding site" evidence="5">
    <location>
        <position position="800"/>
    </location>
    <ligand>
        <name>Zn(2+)</name>
        <dbReference type="ChEBI" id="CHEBI:29105"/>
        <label>2</label>
    </ligand>
</feature>
<feature type="binding site" evidence="5">
    <location>
        <position position="804"/>
    </location>
    <ligand>
        <name>Zn(2+)</name>
        <dbReference type="ChEBI" id="CHEBI:29105"/>
        <label>2</label>
    </ligand>
</feature>
<feature type="modified residue" description="Phosphoserine" evidence="2">
    <location>
        <position position="124"/>
    </location>
</feature>
<feature type="modified residue" description="Phosphoserine" evidence="3">
    <location>
        <position position="138"/>
    </location>
</feature>
<feature type="modified residue" description="Phosphoserine" evidence="3">
    <location>
        <position position="225"/>
    </location>
</feature>
<feature type="modified residue" description="Phosphoserine; by IKKA" evidence="3">
    <location>
        <position position="618"/>
    </location>
</feature>
<feature type="modified residue" description="Phosphoserine" evidence="2">
    <location>
        <position position="631"/>
    </location>
</feature>
<feature type="modified residue" description="Phosphoserine; by IKKA" evidence="3">
    <location>
        <position position="692"/>
    </location>
</feature>
<feature type="splice variant" id="VSP_018357" description="In isoform 2." evidence="7">
    <original>LQLAEKDKEINCLASFLENLSREK</original>
    <variation>VSSENVRLELAELEDSYS</variation>
    <location>
        <begin position="590"/>
        <end position="613"/>
    </location>
</feature>
<feature type="splice variant" id="VSP_018358" description="In isoform 2." evidence="7">
    <original>VCPMCSEQFPPDYDQQGFERHVQTHFDQNVLNFD</original>
    <variation>LPGEFFIEYPWATYAPHETLGPWRRLGKVLAVLSSDTQLWCEKPDISLGRQKQKILGMCWSESRQISDLQVQ</variation>
    <location>
        <begin position="780"/>
        <end position="813"/>
    </location>
</feature>
<sequence>MTSFQEVPLQTSNFAHVIFQNVAKSYLPNAHLECHYTLTPYIHPHSKDWVGIFKVGWSTARDYYTFLWSPMPEQYVEGSTVNCVLAFQGYYLPNDDGEFYQFCYVTHKGEIRGASTPFQFRAASPVEELLTMEDEGNSDMLVVTTKAGLLELKIEKTLKEKEELLKLVSVLEKETAQLREQVGRMERELSHEKSRCEQLQAEQKGLLEVSQSLRVENEEFMKRYSDATSKAHQLEEDIVSVTHKAVEKETELDSLKDKLRKAQQEKEQLECQLKTEKDEKELYKVHLKNTEIENTKLVSEIQTLKNVDGNKESMITHFKEEIGKLQSCLADKENLHRALLLTTSNKEDTLLLKEQLRKAEEQVQATRQELIFLAKELSDAVNVRDKTMADLHTARLENERVKKQLADTLAELQLHAVKTDQEKTDTLEHELRREVEDLKLRLQMAADHYKEKFKECQRLQKQINKLSDQSASSNGVFTKRMGSQQKVNDASINTDPAASASAVDVKPAASCAAETDFDMSAKDHVCEVTKEMAEKVEKYNKCKQLLQDEKAKCNKYADELAQMELKWKEQVRIAENVKLELAELEDSYSLQLAEKDKEINCLASFLENLSREKELTKSLEDQKGRKMEGQSPQQVSRCLNTCSEQSGLLPTLPAAQPVLQYGNPYTAHETRDGADGAFYPDEIQRPPVRGPSWEDNVVCSQPARNLSRPDGLEDPEDSREDENVPIPPDPANQHLRGHGAGFCFDSSFDVHKKCPLCELMFPPNYDQIKFEEHVESHWKVCPMCSEQFPPDYDQQGFERHVQTHFDQNVLNFD</sequence>
<name>TAXB1_RAT</name>
<proteinExistence type="evidence at transcript level"/>